<reference key="1">
    <citation type="journal article" date="2000" name="Nature">
        <title>Sequence and analysis of chromosome 5 of the plant Arabidopsis thaliana.</title>
        <authorList>
            <person name="Tabata S."/>
            <person name="Kaneko T."/>
            <person name="Nakamura Y."/>
            <person name="Kotani H."/>
            <person name="Kato T."/>
            <person name="Asamizu E."/>
            <person name="Miyajima N."/>
            <person name="Sasamoto S."/>
            <person name="Kimura T."/>
            <person name="Hosouchi T."/>
            <person name="Kawashima K."/>
            <person name="Kohara M."/>
            <person name="Matsumoto M."/>
            <person name="Matsuno A."/>
            <person name="Muraki A."/>
            <person name="Nakayama S."/>
            <person name="Nakazaki N."/>
            <person name="Naruo K."/>
            <person name="Okumura S."/>
            <person name="Shinpo S."/>
            <person name="Takeuchi C."/>
            <person name="Wada T."/>
            <person name="Watanabe A."/>
            <person name="Yamada M."/>
            <person name="Yasuda M."/>
            <person name="Sato S."/>
            <person name="de la Bastide M."/>
            <person name="Huang E."/>
            <person name="Spiegel L."/>
            <person name="Gnoj L."/>
            <person name="O'Shaughnessy A."/>
            <person name="Preston R."/>
            <person name="Habermann K."/>
            <person name="Murray J."/>
            <person name="Johnson D."/>
            <person name="Rohlfing T."/>
            <person name="Nelson J."/>
            <person name="Stoneking T."/>
            <person name="Pepin K."/>
            <person name="Spieth J."/>
            <person name="Sekhon M."/>
            <person name="Armstrong J."/>
            <person name="Becker M."/>
            <person name="Belter E."/>
            <person name="Cordum H."/>
            <person name="Cordes M."/>
            <person name="Courtney L."/>
            <person name="Courtney W."/>
            <person name="Dante M."/>
            <person name="Du H."/>
            <person name="Edwards J."/>
            <person name="Fryman J."/>
            <person name="Haakensen B."/>
            <person name="Lamar E."/>
            <person name="Latreille P."/>
            <person name="Leonard S."/>
            <person name="Meyer R."/>
            <person name="Mulvaney E."/>
            <person name="Ozersky P."/>
            <person name="Riley A."/>
            <person name="Strowmatt C."/>
            <person name="Wagner-McPherson C."/>
            <person name="Wollam A."/>
            <person name="Yoakum M."/>
            <person name="Bell M."/>
            <person name="Dedhia N."/>
            <person name="Parnell L."/>
            <person name="Shah R."/>
            <person name="Rodriguez M."/>
            <person name="Hoon See L."/>
            <person name="Vil D."/>
            <person name="Baker J."/>
            <person name="Kirchoff K."/>
            <person name="Toth K."/>
            <person name="King L."/>
            <person name="Bahret A."/>
            <person name="Miller B."/>
            <person name="Marra M.A."/>
            <person name="Martienssen R."/>
            <person name="McCombie W.R."/>
            <person name="Wilson R.K."/>
            <person name="Murphy G."/>
            <person name="Bancroft I."/>
            <person name="Volckaert G."/>
            <person name="Wambutt R."/>
            <person name="Duesterhoeft A."/>
            <person name="Stiekema W."/>
            <person name="Pohl T."/>
            <person name="Entian K.-D."/>
            <person name="Terryn N."/>
            <person name="Hartley N."/>
            <person name="Bent E."/>
            <person name="Johnson S."/>
            <person name="Langham S.-A."/>
            <person name="McCullagh B."/>
            <person name="Robben J."/>
            <person name="Grymonprez B."/>
            <person name="Zimmermann W."/>
            <person name="Ramsperger U."/>
            <person name="Wedler H."/>
            <person name="Balke K."/>
            <person name="Wedler E."/>
            <person name="Peters S."/>
            <person name="van Staveren M."/>
            <person name="Dirkse W."/>
            <person name="Mooijman P."/>
            <person name="Klein Lankhorst R."/>
            <person name="Weitzenegger T."/>
            <person name="Bothe G."/>
            <person name="Rose M."/>
            <person name="Hauf J."/>
            <person name="Berneiser S."/>
            <person name="Hempel S."/>
            <person name="Feldpausch M."/>
            <person name="Lamberth S."/>
            <person name="Villarroel R."/>
            <person name="Gielen J."/>
            <person name="Ardiles W."/>
            <person name="Bents O."/>
            <person name="Lemcke K."/>
            <person name="Kolesov G."/>
            <person name="Mayer K.F.X."/>
            <person name="Rudd S."/>
            <person name="Schoof H."/>
            <person name="Schueller C."/>
            <person name="Zaccaria P."/>
            <person name="Mewes H.-W."/>
            <person name="Bevan M."/>
            <person name="Fransz P.F."/>
        </authorList>
    </citation>
    <scope>NUCLEOTIDE SEQUENCE [LARGE SCALE GENOMIC DNA]</scope>
    <source>
        <strain>cv. Columbia</strain>
    </source>
</reference>
<reference key="2">
    <citation type="journal article" date="2017" name="Plant J.">
        <title>Araport11: a complete reannotation of the Arabidopsis thaliana reference genome.</title>
        <authorList>
            <person name="Cheng C.Y."/>
            <person name="Krishnakumar V."/>
            <person name="Chan A.P."/>
            <person name="Thibaud-Nissen F."/>
            <person name="Schobel S."/>
            <person name="Town C.D."/>
        </authorList>
    </citation>
    <scope>GENOME REANNOTATION</scope>
    <source>
        <strain>cv. Columbia</strain>
    </source>
</reference>
<reference key="3">
    <citation type="journal article" date="2012" name="Nature">
        <title>A novel putative auxin carrier family regulates intracellular auxin homeostasis in plants.</title>
        <authorList>
            <person name="Barbez E."/>
            <person name="Kubes M."/>
            <person name="Rolcik J."/>
            <person name="Beziat C."/>
            <person name="Pencik A."/>
            <person name="Wang B."/>
            <person name="Rosquete M.R."/>
            <person name="Zhu J."/>
            <person name="Dobrev P.I."/>
            <person name="Lee Y."/>
            <person name="Zazimalova E."/>
            <person name="Petrasek J."/>
            <person name="Geisler M."/>
            <person name="Friml J."/>
            <person name="Kleine-Vehn J."/>
        </authorList>
    </citation>
    <scope>TISSUE SPECIFICITY</scope>
    <scope>INDUCTION BY AUXIN</scope>
    <scope>GENE FAMILY</scope>
    <scope>NOMENCLATURE</scope>
    <scope>SUBCELLULAR LOCATION</scope>
</reference>
<reference key="4">
    <citation type="journal article" date="2012" name="Front. Plant Sci.">
        <title>Evolution and structural diversification of PILS putative auxin carriers in plants.</title>
        <authorList>
            <person name="Feraru E."/>
            <person name="Vosolsobe S."/>
            <person name="Feraru M.I."/>
            <person name="Petrasek J."/>
            <person name="Kleine-Vehn J."/>
        </authorList>
    </citation>
    <scope>GENE FAMILY</scope>
    <scope>NOMENCLATURE</scope>
</reference>
<name>PILS6_ARATH</name>
<gene>
    <name evidence="3" type="primary">PILS6</name>
    <name evidence="7" type="ordered locus">At5g01990</name>
    <name evidence="8" type="ORF">T7H20_40</name>
</gene>
<evidence type="ECO:0000255" key="1"/>
<evidence type="ECO:0000269" key="2">
    <source>
    </source>
</evidence>
<evidence type="ECO:0000303" key="3">
    <source>
    </source>
</evidence>
<evidence type="ECO:0000305" key="4"/>
<evidence type="ECO:0000305" key="5">
    <source>
    </source>
</evidence>
<evidence type="ECO:0000305" key="6">
    <source>
    </source>
</evidence>
<evidence type="ECO:0000312" key="7">
    <source>
        <dbReference type="Araport" id="AT5G01990"/>
    </source>
</evidence>
<evidence type="ECO:0000312" key="8">
    <source>
        <dbReference type="EMBL" id="CAB82972.1"/>
    </source>
</evidence>
<sequence length="431" mass="46465">MIARILAALADSMEMPVAAGGGSVLGTIKIAVMPIAKVFTMCFLGLLMASKYVNILPPSGRKLLNGLVFSLLLPCLIFSQLGQAVTLQKMLQWWFIPVNVVLGTISGSIIGFIVASIVRPPYPYFKFTIIQIGVGNIGNVPLVLLAALCRDTSNPFGDSEKCSIDGTAYISFGQWVGAIILYTYVYQMFAPPPEGFDAEEENLALKTLPVDAAPEQVPLLTQNFPKDFSPTQDLLPVQSTEPRGRGVSRKGKIAQIFVFLYEKLKLKQIVQPAIVASILAMILGAIPFTKKLIFTNGAPLFFFTDSCMILGDAMIPCILLALGGNLINGPGSSKLGFKTTAAIIIGRLVLVPPVGLGIVTVADKLGFLPADDKMFRFVLLLQHTMPTSVLSGAVANLRGCGRESAAVLFWVHIFAIFSMAGWMVLYINILF</sequence>
<comment type="function">
    <text evidence="5">Involved in cellular auxin homeostasis by regulating auxin metabolism. Regulates intracellular auxin accumulation at the endoplasmic reticulum and thus auxin availability for nuclear auxin signaling.</text>
</comment>
<comment type="subcellular location">
    <subcellularLocation>
        <location evidence="2">Endoplasmic reticulum membrane</location>
        <topology evidence="4">Multi-pass membrane protein</topology>
    </subcellularLocation>
</comment>
<comment type="tissue specificity">
    <text evidence="2">Expressed in seedlings, rosette and cauline leaves, stems and flowers.</text>
</comment>
<comment type="induction">
    <text evidence="2">Up-regulated by auxin application.</text>
</comment>
<comment type="similarity">
    <text evidence="4">Belongs to the auxin efflux carrier (TC 2.A.69.2) family.</text>
</comment>
<organism>
    <name type="scientific">Arabidopsis thaliana</name>
    <name type="common">Mouse-ear cress</name>
    <dbReference type="NCBI Taxonomy" id="3702"/>
    <lineage>
        <taxon>Eukaryota</taxon>
        <taxon>Viridiplantae</taxon>
        <taxon>Streptophyta</taxon>
        <taxon>Embryophyta</taxon>
        <taxon>Tracheophyta</taxon>
        <taxon>Spermatophyta</taxon>
        <taxon>Magnoliopsida</taxon>
        <taxon>eudicotyledons</taxon>
        <taxon>Gunneridae</taxon>
        <taxon>Pentapetalae</taxon>
        <taxon>rosids</taxon>
        <taxon>malvids</taxon>
        <taxon>Brassicales</taxon>
        <taxon>Brassicaceae</taxon>
        <taxon>Camelineae</taxon>
        <taxon>Arabidopsis</taxon>
    </lineage>
</organism>
<accession>Q9LZN2</accession>
<proteinExistence type="evidence at transcript level"/>
<protein>
    <recommendedName>
        <fullName evidence="3">Protein PIN-LIKES 6</fullName>
    </recommendedName>
    <alternativeName>
        <fullName evidence="3">Auxin efflux carrier-like protein 6</fullName>
    </alternativeName>
</protein>
<keyword id="KW-0927">Auxin signaling pathway</keyword>
<keyword id="KW-0256">Endoplasmic reticulum</keyword>
<keyword id="KW-0472">Membrane</keyword>
<keyword id="KW-1185">Reference proteome</keyword>
<keyword id="KW-0812">Transmembrane</keyword>
<keyword id="KW-1133">Transmembrane helix</keyword>
<keyword id="KW-0813">Transport</keyword>
<feature type="chain" id="PRO_0000436501" description="Protein PIN-LIKES 6">
    <location>
        <begin position="1"/>
        <end position="431"/>
    </location>
</feature>
<feature type="topological domain" description="Lumenal" evidence="6">
    <location>
        <begin position="1"/>
        <end position="29"/>
    </location>
</feature>
<feature type="transmembrane region" description="Helical" evidence="1">
    <location>
        <begin position="30"/>
        <end position="50"/>
    </location>
</feature>
<feature type="topological domain" description="Cytoplasmic" evidence="6">
    <location>
        <begin position="51"/>
        <end position="66"/>
    </location>
</feature>
<feature type="transmembrane region" description="Helical" evidence="1">
    <location>
        <begin position="67"/>
        <end position="87"/>
    </location>
</feature>
<feature type="topological domain" description="Lumenal" evidence="6">
    <location>
        <begin position="88"/>
        <end position="93"/>
    </location>
</feature>
<feature type="transmembrane region" description="Helical" evidence="1">
    <location>
        <begin position="94"/>
        <end position="114"/>
    </location>
</feature>
<feature type="topological domain" description="Cytoplasmic" evidence="6">
    <location>
        <begin position="115"/>
        <end position="128"/>
    </location>
</feature>
<feature type="transmembrane region" description="Helical" evidence="1">
    <location>
        <begin position="129"/>
        <end position="149"/>
    </location>
</feature>
<feature type="topological domain" description="Lumenal" evidence="6">
    <location>
        <begin position="150"/>
        <end position="169"/>
    </location>
</feature>
<feature type="transmembrane region" description="Helical" evidence="1">
    <location>
        <begin position="170"/>
        <end position="190"/>
    </location>
</feature>
<feature type="topological domain" description="Cytoplasmic" evidence="6">
    <location>
        <begin position="191"/>
        <end position="268"/>
    </location>
</feature>
<feature type="transmembrane region" description="Helical" evidence="1">
    <location>
        <begin position="269"/>
        <end position="289"/>
    </location>
</feature>
<feature type="topological domain" description="Lumenal" evidence="6">
    <location>
        <begin position="290"/>
        <end position="306"/>
    </location>
</feature>
<feature type="transmembrane region" description="Helical" evidence="1">
    <location>
        <begin position="307"/>
        <end position="327"/>
    </location>
</feature>
<feature type="topological domain" description="Cytoplasmic" evidence="6">
    <location>
        <begin position="328"/>
        <end position="340"/>
    </location>
</feature>
<feature type="transmembrane region" description="Helical" evidence="1">
    <location>
        <begin position="341"/>
        <end position="361"/>
    </location>
</feature>
<feature type="topological domain" description="Lumenal" evidence="6">
    <location>
        <begin position="362"/>
        <end position="376"/>
    </location>
</feature>
<feature type="transmembrane region" description="Helical" evidence="1">
    <location>
        <begin position="377"/>
        <end position="397"/>
    </location>
</feature>
<feature type="topological domain" description="Cytoplasmic" evidence="6">
    <location>
        <begin position="398"/>
        <end position="406"/>
    </location>
</feature>
<feature type="transmembrane region" description="Helical" evidence="1">
    <location>
        <begin position="407"/>
        <end position="427"/>
    </location>
</feature>
<feature type="topological domain" description="Lumenal" evidence="6">
    <location>
        <begin position="428"/>
        <end position="431"/>
    </location>
</feature>
<dbReference type="EMBL" id="AL162508">
    <property type="protein sequence ID" value="CAB82972.1"/>
    <property type="molecule type" value="Genomic_DNA"/>
</dbReference>
<dbReference type="EMBL" id="CP002688">
    <property type="protein sequence ID" value="AED90417.1"/>
    <property type="molecule type" value="Genomic_DNA"/>
</dbReference>
<dbReference type="PIR" id="T48220">
    <property type="entry name" value="T48220"/>
</dbReference>
<dbReference type="RefSeq" id="NP_195819.1">
    <property type="nucleotide sequence ID" value="NM_120277.3"/>
</dbReference>
<dbReference type="FunCoup" id="Q9LZN2">
    <property type="interactions" value="604"/>
</dbReference>
<dbReference type="STRING" id="3702.Q9LZN2"/>
<dbReference type="PaxDb" id="3702-AT5G01990.1"/>
<dbReference type="ProteomicsDB" id="235001"/>
<dbReference type="EnsemblPlants" id="AT5G01990.1">
    <property type="protein sequence ID" value="AT5G01990.1"/>
    <property type="gene ID" value="AT5G01990"/>
</dbReference>
<dbReference type="GeneID" id="830729"/>
<dbReference type="Gramene" id="AT5G01990.1">
    <property type="protein sequence ID" value="AT5G01990.1"/>
    <property type="gene ID" value="AT5G01990"/>
</dbReference>
<dbReference type="KEGG" id="ath:AT5G01990"/>
<dbReference type="Araport" id="AT5G01990"/>
<dbReference type="TAIR" id="AT5G01990">
    <property type="gene designation" value="PILS6"/>
</dbReference>
<dbReference type="eggNOG" id="KOG2722">
    <property type="taxonomic scope" value="Eukaryota"/>
</dbReference>
<dbReference type="HOGENOM" id="CLU_044945_0_0_1"/>
<dbReference type="InParanoid" id="Q9LZN2"/>
<dbReference type="OMA" id="IFVVQTF"/>
<dbReference type="PhylomeDB" id="Q9LZN2"/>
<dbReference type="PRO" id="PR:Q9LZN2"/>
<dbReference type="Proteomes" id="UP000006548">
    <property type="component" value="Chromosome 5"/>
</dbReference>
<dbReference type="ExpressionAtlas" id="Q9LZN2">
    <property type="expression patterns" value="baseline and differential"/>
</dbReference>
<dbReference type="GO" id="GO:0005789">
    <property type="term" value="C:endoplasmic reticulum membrane"/>
    <property type="evidence" value="ECO:0000314"/>
    <property type="project" value="UniProtKB"/>
</dbReference>
<dbReference type="GO" id="GO:0009734">
    <property type="term" value="P:auxin-activated signaling pathway"/>
    <property type="evidence" value="ECO:0007669"/>
    <property type="project" value="UniProtKB-KW"/>
</dbReference>
<dbReference type="GO" id="GO:0080162">
    <property type="term" value="P:endoplasmic reticulum to cytosol auxin transport"/>
    <property type="evidence" value="ECO:0007669"/>
    <property type="project" value="InterPro"/>
</dbReference>
<dbReference type="GO" id="GO:0009733">
    <property type="term" value="P:response to auxin"/>
    <property type="evidence" value="ECO:0000270"/>
    <property type="project" value="UniProtKB"/>
</dbReference>
<dbReference type="InterPro" id="IPR004776">
    <property type="entry name" value="Mem_transp_PIN-like"/>
</dbReference>
<dbReference type="InterPro" id="IPR039305">
    <property type="entry name" value="PILS2/6"/>
</dbReference>
<dbReference type="PANTHER" id="PTHR31419">
    <property type="entry name" value="PROTEIN PIN-LIKES 2"/>
    <property type="match status" value="1"/>
</dbReference>
<dbReference type="PANTHER" id="PTHR31419:SF1">
    <property type="entry name" value="PROTEIN PIN-LIKES 6"/>
    <property type="match status" value="1"/>
</dbReference>
<dbReference type="Pfam" id="PF03547">
    <property type="entry name" value="Mem_trans"/>
    <property type="match status" value="1"/>
</dbReference>